<accession>Q8CRP6</accession>
<comment type="function">
    <text evidence="1">DEAD-box RNA helicase possibly involved in RNA degradation. Unwinds dsRNA in both 5'- and 3'-directions, has RNA-dependent ATPase activity.</text>
</comment>
<comment type="catalytic activity">
    <reaction evidence="1">
        <text>ATP + H2O = ADP + phosphate + H(+)</text>
        <dbReference type="Rhea" id="RHEA:13065"/>
        <dbReference type="ChEBI" id="CHEBI:15377"/>
        <dbReference type="ChEBI" id="CHEBI:15378"/>
        <dbReference type="ChEBI" id="CHEBI:30616"/>
        <dbReference type="ChEBI" id="CHEBI:43474"/>
        <dbReference type="ChEBI" id="CHEBI:456216"/>
        <dbReference type="EC" id="3.6.4.13"/>
    </reaction>
</comment>
<comment type="subunit">
    <text evidence="1">Oligomerizes, may be a member of the RNA degradosome.</text>
</comment>
<comment type="subcellular location">
    <subcellularLocation>
        <location evidence="1">Cytoplasm</location>
    </subcellularLocation>
</comment>
<comment type="similarity">
    <text evidence="1">Belongs to the DEAD box helicase family. CshA subfamily.</text>
</comment>
<organism>
    <name type="scientific">Staphylococcus epidermidis (strain ATCC 12228 / FDA PCI 1200)</name>
    <dbReference type="NCBI Taxonomy" id="176280"/>
    <lineage>
        <taxon>Bacteria</taxon>
        <taxon>Bacillati</taxon>
        <taxon>Bacillota</taxon>
        <taxon>Bacilli</taxon>
        <taxon>Bacillales</taxon>
        <taxon>Staphylococcaceae</taxon>
        <taxon>Staphylococcus</taxon>
    </lineage>
</organism>
<feature type="chain" id="PRO_0000284827" description="DEAD-box ATP-dependent RNA helicase CshA">
    <location>
        <begin position="1"/>
        <end position="509"/>
    </location>
</feature>
<feature type="domain" description="Helicase ATP-binding" evidence="1">
    <location>
        <begin position="33"/>
        <end position="203"/>
    </location>
</feature>
<feature type="domain" description="Helicase C-terminal" evidence="1">
    <location>
        <begin position="214"/>
        <end position="375"/>
    </location>
</feature>
<feature type="region of interest" description="Disordered" evidence="2">
    <location>
        <begin position="440"/>
        <end position="509"/>
    </location>
</feature>
<feature type="short sequence motif" description="Q motif">
    <location>
        <begin position="2"/>
        <end position="30"/>
    </location>
</feature>
<feature type="short sequence motif" description="DEAD box">
    <location>
        <begin position="150"/>
        <end position="153"/>
    </location>
</feature>
<feature type="compositionally biased region" description="Basic residues" evidence="2">
    <location>
        <begin position="440"/>
        <end position="459"/>
    </location>
</feature>
<feature type="compositionally biased region" description="Basic residues" evidence="2">
    <location>
        <begin position="467"/>
        <end position="482"/>
    </location>
</feature>
<feature type="compositionally biased region" description="Basic and acidic residues" evidence="2">
    <location>
        <begin position="483"/>
        <end position="492"/>
    </location>
</feature>
<feature type="binding site" evidence="1">
    <location>
        <begin position="46"/>
        <end position="53"/>
    </location>
    <ligand>
        <name>ATP</name>
        <dbReference type="ChEBI" id="CHEBI:30616"/>
    </ligand>
</feature>
<name>CSHA_STAES</name>
<reference key="1">
    <citation type="journal article" date="2003" name="Mol. Microbiol.">
        <title>Genome-based analysis of virulence genes in a non-biofilm-forming Staphylococcus epidermidis strain (ATCC 12228).</title>
        <authorList>
            <person name="Zhang Y.-Q."/>
            <person name="Ren S.-X."/>
            <person name="Li H.-L."/>
            <person name="Wang Y.-X."/>
            <person name="Fu G."/>
            <person name="Yang J."/>
            <person name="Qin Z.-Q."/>
            <person name="Miao Y.-G."/>
            <person name="Wang W.-Y."/>
            <person name="Chen R.-S."/>
            <person name="Shen Y."/>
            <person name="Chen Z."/>
            <person name="Yuan Z.-H."/>
            <person name="Zhao G.-P."/>
            <person name="Qu D."/>
            <person name="Danchin A."/>
            <person name="Wen Y.-M."/>
        </authorList>
    </citation>
    <scope>NUCLEOTIDE SEQUENCE [LARGE SCALE GENOMIC DNA]</scope>
    <source>
        <strain>ATCC 12228 / FDA PCI 1200</strain>
    </source>
</reference>
<evidence type="ECO:0000255" key="1">
    <source>
        <dbReference type="HAMAP-Rule" id="MF_01493"/>
    </source>
</evidence>
<evidence type="ECO:0000256" key="2">
    <source>
        <dbReference type="SAM" id="MobiDB-lite"/>
    </source>
</evidence>
<sequence length="509" mass="57880">MQNFKELGISDKTVQTLEAMGFKEPTPIQKDSIPYALEGDDILGQAQTGTGKTGAFGIPLIEKVVGQQGVQSLILAPTRELAMQVAEQLREFSKGQKVQVVTVFGGMPIERQIKVLKRGPQIVVGTPGRVIDHLNRRTLKTQGIHTLILDEADEMMNMGFIDDMRFIMDKIPAEQRQTMLFSATMPKAIQELVQQFMKAPKIIKTMNNEMSDPQIDEYYTIVKELEKFDTFTNFLDVHQPELAIVFGRTKRRVDELTSALLSKGYKAEGLHGDITQAKRLEVLKKFKNDQIDILVATDVAARGLDISGVSHVYNFDIPQDTESYTHRIGRTGRAGKEGIAVTFVNPIEMDYIRQIEDVNNRRMKALRPPHRKEVLKAREDDIKDRVQNWMSRENEPRLQRISSELLKEYDSTELVASLLQELVEANDEVEVQLTFEKPLARKNRSSKGGSRRSNHKRGNGKFDNKNRRSKGSKGQSSKKKNQKKFDRRDKQQKSGNQSLKGRTFADHQK</sequence>
<keyword id="KW-0067">ATP-binding</keyword>
<keyword id="KW-0963">Cytoplasm</keyword>
<keyword id="KW-0347">Helicase</keyword>
<keyword id="KW-0378">Hydrolase</keyword>
<keyword id="KW-0547">Nucleotide-binding</keyword>
<keyword id="KW-0694">RNA-binding</keyword>
<keyword id="KW-0346">Stress response</keyword>
<proteinExistence type="inferred from homology"/>
<protein>
    <recommendedName>
        <fullName evidence="1">DEAD-box ATP-dependent RNA helicase CshA</fullName>
        <ecNumber evidence="1">3.6.4.13</ecNumber>
    </recommendedName>
</protein>
<dbReference type="EC" id="3.6.4.13" evidence="1"/>
<dbReference type="EMBL" id="AE015929">
    <property type="protein sequence ID" value="AAO05278.1"/>
    <property type="molecule type" value="Genomic_DNA"/>
</dbReference>
<dbReference type="RefSeq" id="NP_765234.1">
    <property type="nucleotide sequence ID" value="NC_004461.1"/>
</dbReference>
<dbReference type="RefSeq" id="WP_002485310.1">
    <property type="nucleotide sequence ID" value="NC_004461.1"/>
</dbReference>
<dbReference type="SMR" id="Q8CRP6"/>
<dbReference type="KEGG" id="sep:SE_1679"/>
<dbReference type="PATRIC" id="fig|176280.10.peg.1640"/>
<dbReference type="eggNOG" id="COG0513">
    <property type="taxonomic scope" value="Bacteria"/>
</dbReference>
<dbReference type="HOGENOM" id="CLU_003041_21_0_9"/>
<dbReference type="OrthoDB" id="9805696at2"/>
<dbReference type="Proteomes" id="UP000001411">
    <property type="component" value="Chromosome"/>
</dbReference>
<dbReference type="GO" id="GO:0005829">
    <property type="term" value="C:cytosol"/>
    <property type="evidence" value="ECO:0007669"/>
    <property type="project" value="TreeGrafter"/>
</dbReference>
<dbReference type="GO" id="GO:0005840">
    <property type="term" value="C:ribosome"/>
    <property type="evidence" value="ECO:0007669"/>
    <property type="project" value="TreeGrafter"/>
</dbReference>
<dbReference type="GO" id="GO:0005524">
    <property type="term" value="F:ATP binding"/>
    <property type="evidence" value="ECO:0007669"/>
    <property type="project" value="UniProtKB-UniRule"/>
</dbReference>
<dbReference type="GO" id="GO:0016887">
    <property type="term" value="F:ATP hydrolysis activity"/>
    <property type="evidence" value="ECO:0007669"/>
    <property type="project" value="RHEA"/>
</dbReference>
<dbReference type="GO" id="GO:0003724">
    <property type="term" value="F:RNA helicase activity"/>
    <property type="evidence" value="ECO:0007669"/>
    <property type="project" value="UniProtKB-UniRule"/>
</dbReference>
<dbReference type="GO" id="GO:0033592">
    <property type="term" value="F:RNA strand annealing activity"/>
    <property type="evidence" value="ECO:0007669"/>
    <property type="project" value="TreeGrafter"/>
</dbReference>
<dbReference type="GO" id="GO:0009409">
    <property type="term" value="P:response to cold"/>
    <property type="evidence" value="ECO:0007669"/>
    <property type="project" value="TreeGrafter"/>
</dbReference>
<dbReference type="GO" id="GO:0006401">
    <property type="term" value="P:RNA catabolic process"/>
    <property type="evidence" value="ECO:0007669"/>
    <property type="project" value="UniProtKB-UniRule"/>
</dbReference>
<dbReference type="CDD" id="cd00268">
    <property type="entry name" value="DEADc"/>
    <property type="match status" value="1"/>
</dbReference>
<dbReference type="CDD" id="cd18787">
    <property type="entry name" value="SF2_C_DEAD"/>
    <property type="match status" value="1"/>
</dbReference>
<dbReference type="FunFam" id="3.40.50.300:FF:000108">
    <property type="entry name" value="ATP-dependent RNA helicase RhlE"/>
    <property type="match status" value="1"/>
</dbReference>
<dbReference type="Gene3D" id="3.40.50.300">
    <property type="entry name" value="P-loop containing nucleotide triphosphate hydrolases"/>
    <property type="match status" value="2"/>
</dbReference>
<dbReference type="HAMAP" id="MF_01493">
    <property type="entry name" value="DEAD_helicase_CshA"/>
    <property type="match status" value="1"/>
</dbReference>
<dbReference type="InterPro" id="IPR011545">
    <property type="entry name" value="DEAD/DEAH_box_helicase_dom"/>
</dbReference>
<dbReference type="InterPro" id="IPR050547">
    <property type="entry name" value="DEAD_box_RNA_helicases"/>
</dbReference>
<dbReference type="InterPro" id="IPR030880">
    <property type="entry name" value="DEAD_helicase_CshA"/>
</dbReference>
<dbReference type="InterPro" id="IPR014001">
    <property type="entry name" value="Helicase_ATP-bd"/>
</dbReference>
<dbReference type="InterPro" id="IPR001650">
    <property type="entry name" value="Helicase_C-like"/>
</dbReference>
<dbReference type="InterPro" id="IPR027417">
    <property type="entry name" value="P-loop_NTPase"/>
</dbReference>
<dbReference type="InterPro" id="IPR000629">
    <property type="entry name" value="RNA-helicase_DEAD-box_CS"/>
</dbReference>
<dbReference type="InterPro" id="IPR014014">
    <property type="entry name" value="RNA_helicase_DEAD_Q_motif"/>
</dbReference>
<dbReference type="PANTHER" id="PTHR47963">
    <property type="entry name" value="DEAD-BOX ATP-DEPENDENT RNA HELICASE 47, MITOCHONDRIAL"/>
    <property type="match status" value="1"/>
</dbReference>
<dbReference type="PANTHER" id="PTHR47963:SF5">
    <property type="entry name" value="DEAD-BOX ATP-DEPENDENT RNA HELICASE CSHA"/>
    <property type="match status" value="1"/>
</dbReference>
<dbReference type="Pfam" id="PF00270">
    <property type="entry name" value="DEAD"/>
    <property type="match status" value="1"/>
</dbReference>
<dbReference type="Pfam" id="PF00271">
    <property type="entry name" value="Helicase_C"/>
    <property type="match status" value="1"/>
</dbReference>
<dbReference type="SMART" id="SM00487">
    <property type="entry name" value="DEXDc"/>
    <property type="match status" value="1"/>
</dbReference>
<dbReference type="SMART" id="SM00490">
    <property type="entry name" value="HELICc"/>
    <property type="match status" value="1"/>
</dbReference>
<dbReference type="SUPFAM" id="SSF52540">
    <property type="entry name" value="P-loop containing nucleoside triphosphate hydrolases"/>
    <property type="match status" value="1"/>
</dbReference>
<dbReference type="PROSITE" id="PS00039">
    <property type="entry name" value="DEAD_ATP_HELICASE"/>
    <property type="match status" value="1"/>
</dbReference>
<dbReference type="PROSITE" id="PS51192">
    <property type="entry name" value="HELICASE_ATP_BIND_1"/>
    <property type="match status" value="1"/>
</dbReference>
<dbReference type="PROSITE" id="PS51194">
    <property type="entry name" value="HELICASE_CTER"/>
    <property type="match status" value="1"/>
</dbReference>
<dbReference type="PROSITE" id="PS51195">
    <property type="entry name" value="Q_MOTIF"/>
    <property type="match status" value="1"/>
</dbReference>
<gene>
    <name evidence="1" type="primary">cshA</name>
    <name type="ordered locus">SE_1679</name>
</gene>